<protein>
    <recommendedName>
        <fullName evidence="1">Nicotinamide-nucleotide adenylyltransferase</fullName>
        <ecNumber evidence="1">2.7.7.1</ecNumber>
    </recommendedName>
    <alternativeName>
        <fullName evidence="1">NAD(+) diphosphorylase</fullName>
    </alternativeName>
    <alternativeName>
        <fullName evidence="1">NAD(+) pyrophosphorylase</fullName>
    </alternativeName>
    <alternativeName>
        <fullName evidence="1">NMN adenylyltransferase</fullName>
    </alternativeName>
</protein>
<reference key="1">
    <citation type="journal article" date="2009" name="Stand. Genomic Sci.">
        <title>Complete genome sequence of Methanoculleus marisnigri Romesser et al. 1981 type strain JR1.</title>
        <authorList>
            <person name="Anderson I.J."/>
            <person name="Sieprawska-Lupa M."/>
            <person name="Lapidus A."/>
            <person name="Nolan M."/>
            <person name="Copeland A."/>
            <person name="Glavina Del Rio T."/>
            <person name="Tice H."/>
            <person name="Dalin E."/>
            <person name="Barry K."/>
            <person name="Saunders E."/>
            <person name="Han C."/>
            <person name="Brettin T."/>
            <person name="Detter J.C."/>
            <person name="Bruce D."/>
            <person name="Mikhailova N."/>
            <person name="Pitluck S."/>
            <person name="Hauser L."/>
            <person name="Land M."/>
            <person name="Lucas S."/>
            <person name="Richardson P."/>
            <person name="Whitman W.B."/>
            <person name="Kyrpides N.C."/>
        </authorList>
    </citation>
    <scope>NUCLEOTIDE SEQUENCE [LARGE SCALE GENOMIC DNA]</scope>
    <source>
        <strain>ATCC 35101 / DSM 1498 / JR1</strain>
    </source>
</reference>
<comment type="catalytic activity">
    <reaction evidence="1">
        <text>beta-nicotinamide D-ribonucleotide + ATP + H(+) = diphosphate + NAD(+)</text>
        <dbReference type="Rhea" id="RHEA:21360"/>
        <dbReference type="ChEBI" id="CHEBI:14649"/>
        <dbReference type="ChEBI" id="CHEBI:15378"/>
        <dbReference type="ChEBI" id="CHEBI:30616"/>
        <dbReference type="ChEBI" id="CHEBI:33019"/>
        <dbReference type="ChEBI" id="CHEBI:57540"/>
        <dbReference type="EC" id="2.7.7.1"/>
    </reaction>
</comment>
<comment type="pathway">
    <text evidence="1">Cofactor biosynthesis; NAD(+) biosynthesis; NAD(+) from nicotinamide D-ribonucleotide: step 1/1.</text>
</comment>
<comment type="subcellular location">
    <subcellularLocation>
        <location evidence="1">Cytoplasm</location>
    </subcellularLocation>
</comment>
<comment type="similarity">
    <text evidence="1">Belongs to the archaeal NMN adenylyltransferase family.</text>
</comment>
<evidence type="ECO:0000255" key="1">
    <source>
        <dbReference type="HAMAP-Rule" id="MF_00243"/>
    </source>
</evidence>
<accession>A3CVW1</accession>
<gene>
    <name type="ordered locus">Memar_1582</name>
</gene>
<organism>
    <name type="scientific">Methanoculleus marisnigri (strain ATCC 35101 / DSM 1498 / JR1)</name>
    <dbReference type="NCBI Taxonomy" id="368407"/>
    <lineage>
        <taxon>Archaea</taxon>
        <taxon>Methanobacteriati</taxon>
        <taxon>Methanobacteriota</taxon>
        <taxon>Stenosarchaea group</taxon>
        <taxon>Methanomicrobia</taxon>
        <taxon>Methanomicrobiales</taxon>
        <taxon>Methanomicrobiaceae</taxon>
        <taxon>Methanoculleus</taxon>
    </lineage>
</organism>
<sequence>MSRGFYIGRFQPYHNGHQSVLERIARTADEIVIGVGSAQVSHTVANPFTAGERVLMLTRSLEDLDCPFYVIPIEDVQRNALWVAHVRSMTPPFDTVYSSNPLVMQLFAEAGVDVQSPDMYERLTHSGTVIRQRMLGGEPWEHLVPPAVVDVIREIHGVERLQRIAGSD</sequence>
<name>NADM_METMJ</name>
<proteinExistence type="inferred from homology"/>
<feature type="chain" id="PRO_1000005739" description="Nicotinamide-nucleotide adenylyltransferase">
    <location>
        <begin position="1"/>
        <end position="168"/>
    </location>
</feature>
<dbReference type="EC" id="2.7.7.1" evidence="1"/>
<dbReference type="EMBL" id="CP000562">
    <property type="protein sequence ID" value="ABN57511.1"/>
    <property type="molecule type" value="Genomic_DNA"/>
</dbReference>
<dbReference type="RefSeq" id="WP_011844422.1">
    <property type="nucleotide sequence ID" value="NC_009051.1"/>
</dbReference>
<dbReference type="SMR" id="A3CVW1"/>
<dbReference type="STRING" id="368407.Memar_1582"/>
<dbReference type="GeneID" id="4846102"/>
<dbReference type="KEGG" id="mem:Memar_1582"/>
<dbReference type="eggNOG" id="arCOG00972">
    <property type="taxonomic scope" value="Archaea"/>
</dbReference>
<dbReference type="HOGENOM" id="CLU_108783_0_0_2"/>
<dbReference type="OrthoDB" id="264480at2157"/>
<dbReference type="UniPathway" id="UPA00253">
    <property type="reaction ID" value="UER00600"/>
</dbReference>
<dbReference type="Proteomes" id="UP000002146">
    <property type="component" value="Chromosome"/>
</dbReference>
<dbReference type="GO" id="GO:0005737">
    <property type="term" value="C:cytoplasm"/>
    <property type="evidence" value="ECO:0007669"/>
    <property type="project" value="UniProtKB-SubCell"/>
</dbReference>
<dbReference type="GO" id="GO:0005524">
    <property type="term" value="F:ATP binding"/>
    <property type="evidence" value="ECO:0007669"/>
    <property type="project" value="UniProtKB-KW"/>
</dbReference>
<dbReference type="GO" id="GO:0000309">
    <property type="term" value="F:nicotinamide-nucleotide adenylyltransferase activity"/>
    <property type="evidence" value="ECO:0007669"/>
    <property type="project" value="UniProtKB-UniRule"/>
</dbReference>
<dbReference type="GO" id="GO:0009435">
    <property type="term" value="P:NAD biosynthetic process"/>
    <property type="evidence" value="ECO:0007669"/>
    <property type="project" value="UniProtKB-UniRule"/>
</dbReference>
<dbReference type="Gene3D" id="3.40.50.620">
    <property type="entry name" value="HUPs"/>
    <property type="match status" value="1"/>
</dbReference>
<dbReference type="HAMAP" id="MF_00243">
    <property type="entry name" value="NMN_adenylyltr"/>
    <property type="match status" value="1"/>
</dbReference>
<dbReference type="InterPro" id="IPR004821">
    <property type="entry name" value="Cyt_trans-like"/>
</dbReference>
<dbReference type="InterPro" id="IPR006418">
    <property type="entry name" value="NMN_Atrans_arc"/>
</dbReference>
<dbReference type="InterPro" id="IPR014729">
    <property type="entry name" value="Rossmann-like_a/b/a_fold"/>
</dbReference>
<dbReference type="NCBIfam" id="TIGR01527">
    <property type="entry name" value="arch_NMN_Atrans"/>
    <property type="match status" value="1"/>
</dbReference>
<dbReference type="NCBIfam" id="TIGR00125">
    <property type="entry name" value="cyt_tran_rel"/>
    <property type="match status" value="1"/>
</dbReference>
<dbReference type="NCBIfam" id="NF002243">
    <property type="entry name" value="PRK01153.1"/>
    <property type="match status" value="1"/>
</dbReference>
<dbReference type="PANTHER" id="PTHR21342:SF0">
    <property type="entry name" value="BIFUNCTIONAL NMN ADENYLYLTRANSFERASE_NUDIX HYDROLASE"/>
    <property type="match status" value="1"/>
</dbReference>
<dbReference type="PANTHER" id="PTHR21342">
    <property type="entry name" value="PHOSPHOPANTETHEINE ADENYLYLTRANSFERASE"/>
    <property type="match status" value="1"/>
</dbReference>
<dbReference type="Pfam" id="PF01467">
    <property type="entry name" value="CTP_transf_like"/>
    <property type="match status" value="1"/>
</dbReference>
<dbReference type="SUPFAM" id="SSF52374">
    <property type="entry name" value="Nucleotidylyl transferase"/>
    <property type="match status" value="1"/>
</dbReference>
<keyword id="KW-0067">ATP-binding</keyword>
<keyword id="KW-0963">Cytoplasm</keyword>
<keyword id="KW-0520">NAD</keyword>
<keyword id="KW-0547">Nucleotide-binding</keyword>
<keyword id="KW-0548">Nucleotidyltransferase</keyword>
<keyword id="KW-0662">Pyridine nucleotide biosynthesis</keyword>
<keyword id="KW-0808">Transferase</keyword>